<protein>
    <recommendedName>
        <fullName>Insulin</fullName>
    </recommendedName>
    <component>
        <recommendedName>
            <fullName>Insulin B chain</fullName>
        </recommendedName>
    </component>
    <component>
        <recommendedName>
            <fullName>Insulin A chain</fullName>
        </recommendedName>
    </component>
</protein>
<keyword id="KW-0119">Carbohydrate metabolism</keyword>
<keyword id="KW-0903">Direct protein sequencing</keyword>
<keyword id="KW-1015">Disulfide bond</keyword>
<keyword id="KW-0313">Glucose metabolism</keyword>
<keyword id="KW-0372">Hormone</keyword>
<keyword id="KW-0964">Secreted</keyword>
<sequence>AAAQHLCGSHLVDALYLVCGEKGFFYNPKGIVEQCCHKPCNIFDLQNYCN</sequence>
<comment type="function">
    <text>Insulin decreases blood glucose concentration. It increases cell permeability to monosaccharides, amino acids and fatty acids. It accelerates glycolysis, the pentose phosphate cycle, and glycogen synthesis in liver.</text>
</comment>
<comment type="subunit">
    <text>Heterodimer of a B chain and an A chain linked by two disulfide bonds.</text>
</comment>
<comment type="subcellular location">
    <subcellularLocation>
        <location>Secreted</location>
    </subcellularLocation>
</comment>
<comment type="similarity">
    <text evidence="2">Belongs to the insulin family.</text>
</comment>
<feature type="peptide" id="PRO_0000015861" description="Insulin B chain">
    <location>
        <begin position="1"/>
        <end position="29"/>
    </location>
</feature>
<feature type="peptide" id="PRO_0000015862" description="Insulin A chain">
    <location>
        <begin position="30"/>
        <end position="50"/>
    </location>
</feature>
<feature type="disulfide bond" description="Interchain (between B and A chains)" evidence="1">
    <location>
        <begin position="7"/>
        <end position="36"/>
    </location>
</feature>
<feature type="disulfide bond" description="Interchain (between B and A chains)" evidence="1">
    <location>
        <begin position="19"/>
        <end position="49"/>
    </location>
</feature>
<feature type="disulfide bond" evidence="1">
    <location>
        <begin position="35"/>
        <end position="40"/>
    </location>
</feature>
<feature type="non-consecutive residues" evidence="2">
    <location>
        <begin position="29"/>
        <end position="30"/>
    </location>
</feature>
<evidence type="ECO:0000250" key="1"/>
<evidence type="ECO:0000305" key="2"/>
<organism>
    <name type="scientific">Oncorhynchus gorbuscha</name>
    <name type="common">Pink salmon</name>
    <name type="synonym">Salmo gorbuscha</name>
    <dbReference type="NCBI Taxonomy" id="8017"/>
    <lineage>
        <taxon>Eukaryota</taxon>
        <taxon>Metazoa</taxon>
        <taxon>Chordata</taxon>
        <taxon>Craniata</taxon>
        <taxon>Vertebrata</taxon>
        <taxon>Euteleostomi</taxon>
        <taxon>Actinopterygii</taxon>
        <taxon>Neopterygii</taxon>
        <taxon>Teleostei</taxon>
        <taxon>Protacanthopterygii</taxon>
        <taxon>Salmoniformes</taxon>
        <taxon>Salmonidae</taxon>
        <taxon>Salmoninae</taxon>
        <taxon>Oncorhynchus</taxon>
    </lineage>
</organism>
<gene>
    <name type="primary">ins</name>
</gene>
<reference key="1">
    <citation type="journal article" date="1987" name="Biokhimiia">
        <title>Amino acid sequence of humpback salmon (Oncorhynchus gorbuscha) insulin.</title>
        <authorList>
            <person name="Rusakov Y.I."/>
            <person name="Karasev V.S."/>
            <person name="Pertseva M.N."/>
            <person name="Pankov Y.A."/>
        </authorList>
    </citation>
    <scope>PROTEIN SEQUENCE</scope>
</reference>
<reference key="2">
    <citation type="journal article" date="1990" name="Comp. Biochem. Physiol.">
        <title>Isolation, primary structure, and biological and immunological properties of pink and chum salmon insulins.</title>
        <authorList>
            <person name="Rusakov Y.I."/>
            <person name="Karasev V.S."/>
            <person name="Bondareva V.M."/>
            <person name="Pertseva M.N."/>
            <person name="Pankov Y.A."/>
        </authorList>
    </citation>
    <scope>PROTEIN SEQUENCE</scope>
</reference>
<dbReference type="PIR" id="S02203">
    <property type="entry name" value="INON"/>
</dbReference>
<dbReference type="SMR" id="P68989"/>
<dbReference type="GO" id="GO:0005615">
    <property type="term" value="C:extracellular space"/>
    <property type="evidence" value="ECO:0007669"/>
    <property type="project" value="TreeGrafter"/>
</dbReference>
<dbReference type="GO" id="GO:0005179">
    <property type="term" value="F:hormone activity"/>
    <property type="evidence" value="ECO:0007669"/>
    <property type="project" value="UniProtKB-KW"/>
</dbReference>
<dbReference type="GO" id="GO:0006006">
    <property type="term" value="P:glucose metabolic process"/>
    <property type="evidence" value="ECO:0007669"/>
    <property type="project" value="UniProtKB-KW"/>
</dbReference>
<dbReference type="CDD" id="cd04367">
    <property type="entry name" value="IlGF_insulin_like"/>
    <property type="match status" value="1"/>
</dbReference>
<dbReference type="Gene3D" id="1.10.100.10">
    <property type="entry name" value="Insulin-like"/>
    <property type="match status" value="1"/>
</dbReference>
<dbReference type="InterPro" id="IPR004825">
    <property type="entry name" value="Insulin"/>
</dbReference>
<dbReference type="InterPro" id="IPR016179">
    <property type="entry name" value="Insulin-like"/>
</dbReference>
<dbReference type="InterPro" id="IPR036438">
    <property type="entry name" value="Insulin-like_sf"/>
</dbReference>
<dbReference type="InterPro" id="IPR022353">
    <property type="entry name" value="Insulin_CS"/>
</dbReference>
<dbReference type="InterPro" id="IPR022352">
    <property type="entry name" value="Insulin_family"/>
</dbReference>
<dbReference type="PANTHER" id="PTHR11454:SF9">
    <property type="entry name" value="INSULIN"/>
    <property type="match status" value="1"/>
</dbReference>
<dbReference type="PANTHER" id="PTHR11454">
    <property type="entry name" value="INSULIN/INSULIN GROWTH FACTOR"/>
    <property type="match status" value="1"/>
</dbReference>
<dbReference type="Pfam" id="PF00049">
    <property type="entry name" value="Insulin"/>
    <property type="match status" value="2"/>
</dbReference>
<dbReference type="PRINTS" id="PR00277">
    <property type="entry name" value="INSULIN"/>
</dbReference>
<dbReference type="PRINTS" id="PR00276">
    <property type="entry name" value="INSULINFAMLY"/>
</dbReference>
<dbReference type="SMART" id="SM00078">
    <property type="entry name" value="IlGF"/>
    <property type="match status" value="1"/>
</dbReference>
<dbReference type="SUPFAM" id="SSF56994">
    <property type="entry name" value="Insulin-like"/>
    <property type="match status" value="1"/>
</dbReference>
<dbReference type="PROSITE" id="PS00262">
    <property type="entry name" value="INSULIN"/>
    <property type="match status" value="1"/>
</dbReference>
<accession>P68989</accession>
<accession>P23187</accession>
<proteinExistence type="evidence at protein level"/>
<name>INS_ONCGO</name>